<accession>C5FPR9</accession>
<organism>
    <name type="scientific">Arthroderma otae (strain ATCC MYA-4605 / CBS 113480)</name>
    <name type="common">Microsporum canis</name>
    <dbReference type="NCBI Taxonomy" id="554155"/>
    <lineage>
        <taxon>Eukaryota</taxon>
        <taxon>Fungi</taxon>
        <taxon>Dikarya</taxon>
        <taxon>Ascomycota</taxon>
        <taxon>Pezizomycotina</taxon>
        <taxon>Eurotiomycetes</taxon>
        <taxon>Eurotiomycetidae</taxon>
        <taxon>Onygenales</taxon>
        <taxon>Arthrodermataceae</taxon>
        <taxon>Microsporum</taxon>
    </lineage>
</organism>
<sequence>MHVTVQLSLLLSLASSLPLVSAIPQHDGQAYTFPSTGRSATADTDPVLEVRQGAYRPPSAWTRLRDSIVESVWGVPQRGKDSETKTGKQSEAASKAPATLQARYGEDVVLRFTIKTQEEMKALVEASNILFLDVWGTHDDGIPSLLGLLPPSLQTSHVPLIRDLAQAIYESYPKNNPSSPSHPGATTRRFSPSASTPESQPHETKNIFFQDYQPLSVLLPWMRLLVSMFSSHTTLISVGTTAEGRDIPALRVGVHPTNNAQQAPRRRTIVISGGAHAREWISVSTVSYIAYSFITGYGKSRSITKLLEQFDYVFIPTVNPDGYVYTFSTDRLWRKNRQSTSLSFCPGIDLDRSWGFEWDGNATRSNPCSESYAGEGPFEAIEAREIADWARKEVTENNVHFAGFVDLHSYSQQILYPYGHSCAHLPANLENLEELGAGLAKAIRRSSREIYDTKAACRGIVASGAREKGTNEPVASYALESTAGSALDWFYHDLDVRFSYQIKLRDRGSYGFLLPREHIVPTGKEIYHAVVAMGKFLVSPHILEEEVDEPHAGEQTQDNSYDEDGDNLFRAQGGDPQVRFTRRNIGAHDDDSE</sequence>
<name>ECM14_ARTOC</name>
<dbReference type="EMBL" id="DS995704">
    <property type="protein sequence ID" value="EEQ31674.1"/>
    <property type="molecule type" value="Genomic_DNA"/>
</dbReference>
<dbReference type="RefSeq" id="XP_002846756.1">
    <property type="nucleotide sequence ID" value="XM_002846710.1"/>
</dbReference>
<dbReference type="SMR" id="C5FPR9"/>
<dbReference type="STRING" id="554155.C5FPR9"/>
<dbReference type="GlyCosmos" id="C5FPR9">
    <property type="glycosylation" value="1 site, No reported glycans"/>
</dbReference>
<dbReference type="GeneID" id="9229870"/>
<dbReference type="VEuPathDB" id="FungiDB:MCYG_04493"/>
<dbReference type="eggNOG" id="KOG2650">
    <property type="taxonomic scope" value="Eukaryota"/>
</dbReference>
<dbReference type="HOGENOM" id="CLU_019326_1_0_1"/>
<dbReference type="OMA" id="WFYHQLH"/>
<dbReference type="OrthoDB" id="3626597at2759"/>
<dbReference type="Proteomes" id="UP000002035">
    <property type="component" value="Unassembled WGS sequence"/>
</dbReference>
<dbReference type="GO" id="GO:0005576">
    <property type="term" value="C:extracellular region"/>
    <property type="evidence" value="ECO:0007669"/>
    <property type="project" value="UniProtKB-SubCell"/>
</dbReference>
<dbReference type="GO" id="GO:0005773">
    <property type="term" value="C:vacuole"/>
    <property type="evidence" value="ECO:0007669"/>
    <property type="project" value="UniProtKB-SubCell"/>
</dbReference>
<dbReference type="GO" id="GO:0008270">
    <property type="term" value="F:zinc ion binding"/>
    <property type="evidence" value="ECO:0007669"/>
    <property type="project" value="InterPro"/>
</dbReference>
<dbReference type="GO" id="GO:0071555">
    <property type="term" value="P:cell wall organization"/>
    <property type="evidence" value="ECO:0007669"/>
    <property type="project" value="UniProtKB-KW"/>
</dbReference>
<dbReference type="GO" id="GO:0006508">
    <property type="term" value="P:proteolysis"/>
    <property type="evidence" value="ECO:0007669"/>
    <property type="project" value="InterPro"/>
</dbReference>
<dbReference type="CDD" id="cd03860">
    <property type="entry name" value="M14_CP_A-B_like"/>
    <property type="match status" value="1"/>
</dbReference>
<dbReference type="FunFam" id="3.40.630.10:FF:000060">
    <property type="entry name" value="Putative metallocarboxypeptidase ecm14"/>
    <property type="match status" value="1"/>
</dbReference>
<dbReference type="Gene3D" id="3.40.630.10">
    <property type="entry name" value="Zn peptidases"/>
    <property type="match status" value="1"/>
</dbReference>
<dbReference type="InterPro" id="IPR000834">
    <property type="entry name" value="Peptidase_M14"/>
</dbReference>
<dbReference type="PANTHER" id="PTHR11705:SF147">
    <property type="entry name" value="INACTIVE METALLOCARBOXYPEPTIDASE ECM14"/>
    <property type="match status" value="1"/>
</dbReference>
<dbReference type="PANTHER" id="PTHR11705">
    <property type="entry name" value="PROTEASE FAMILY M14 CARBOXYPEPTIDASE A,B"/>
    <property type="match status" value="1"/>
</dbReference>
<dbReference type="Pfam" id="PF00246">
    <property type="entry name" value="Peptidase_M14"/>
    <property type="match status" value="1"/>
</dbReference>
<dbReference type="PRINTS" id="PR00765">
    <property type="entry name" value="CRBOXYPTASEA"/>
</dbReference>
<dbReference type="SMART" id="SM00631">
    <property type="entry name" value="Zn_pept"/>
    <property type="match status" value="1"/>
</dbReference>
<dbReference type="SUPFAM" id="SSF53187">
    <property type="entry name" value="Zn-dependent exopeptidases"/>
    <property type="match status" value="1"/>
</dbReference>
<dbReference type="PROSITE" id="PS52035">
    <property type="entry name" value="PEPTIDASE_M14"/>
    <property type="match status" value="1"/>
</dbReference>
<evidence type="ECO:0000250" key="1">
    <source>
        <dbReference type="UniProtKB" id="P00730"/>
    </source>
</evidence>
<evidence type="ECO:0000250" key="2">
    <source>
        <dbReference type="UniProtKB" id="P15085"/>
    </source>
</evidence>
<evidence type="ECO:0000250" key="3">
    <source>
        <dbReference type="UniProtKB" id="P38836"/>
    </source>
</evidence>
<evidence type="ECO:0000255" key="4"/>
<evidence type="ECO:0000255" key="5">
    <source>
        <dbReference type="PROSITE-ProRule" id="PRU01379"/>
    </source>
</evidence>
<evidence type="ECO:0000256" key="6">
    <source>
        <dbReference type="SAM" id="MobiDB-lite"/>
    </source>
</evidence>
<evidence type="ECO:0000305" key="7"/>
<keyword id="KW-0961">Cell wall biogenesis/degradation</keyword>
<keyword id="KW-1015">Disulfide bond</keyword>
<keyword id="KW-0325">Glycoprotein</keyword>
<keyword id="KW-0479">Metal-binding</keyword>
<keyword id="KW-1185">Reference proteome</keyword>
<keyword id="KW-0964">Secreted</keyword>
<keyword id="KW-0732">Signal</keyword>
<keyword id="KW-0926">Vacuole</keyword>
<keyword id="KW-0862">Zinc</keyword>
<reference key="1">
    <citation type="journal article" date="2012" name="MBio">
        <title>Comparative genome analysis of Trichophyton rubrum and related dermatophytes reveals candidate genes involved in infection.</title>
        <authorList>
            <person name="Martinez D.A."/>
            <person name="Oliver B.G."/>
            <person name="Graeser Y."/>
            <person name="Goldberg J.M."/>
            <person name="Li W."/>
            <person name="Martinez-Rossi N.M."/>
            <person name="Monod M."/>
            <person name="Shelest E."/>
            <person name="Barton R.C."/>
            <person name="Birch E."/>
            <person name="Brakhage A.A."/>
            <person name="Chen Z."/>
            <person name="Gurr S.J."/>
            <person name="Heiman D."/>
            <person name="Heitman J."/>
            <person name="Kosti I."/>
            <person name="Rossi A."/>
            <person name="Saif S."/>
            <person name="Samalova M."/>
            <person name="Saunders C.W."/>
            <person name="Shea T."/>
            <person name="Summerbell R.C."/>
            <person name="Xu J."/>
            <person name="Young S."/>
            <person name="Zeng Q."/>
            <person name="Birren B.W."/>
            <person name="Cuomo C.A."/>
            <person name="White T.C."/>
        </authorList>
    </citation>
    <scope>NUCLEOTIDE SEQUENCE [LARGE SCALE GENOMIC DNA]</scope>
    <source>
        <strain>ATCC MYA-4605 / CBS 113480</strain>
    </source>
</reference>
<proteinExistence type="inferred from homology"/>
<comment type="function">
    <text evidence="3">Inactive carboxypeptidase that may play a role in cell wall organization and biogenesis.</text>
</comment>
<comment type="cofactor">
    <cofactor evidence="1">
        <name>Zn(2+)</name>
        <dbReference type="ChEBI" id="CHEBI:29105"/>
    </cofactor>
    <text evidence="1">Binds 1 zinc ion per subunit.</text>
</comment>
<comment type="subcellular location">
    <subcellularLocation>
        <location evidence="3">Vacuole</location>
    </subcellularLocation>
    <subcellularLocation>
        <location evidence="3">Secreted</location>
    </subcellularLocation>
</comment>
<comment type="similarity">
    <text evidence="7">Belongs to the peptidase M14 family.</text>
</comment>
<comment type="caution">
    <text evidence="3">Lacks the conserved Glu residue in position 503 essential for carbopeptidase activity. The mature form lacks catalytic activity towards synthetic peptide substrates.</text>
</comment>
<feature type="signal peptide" evidence="4">
    <location>
        <begin position="1"/>
        <end position="22"/>
    </location>
</feature>
<feature type="propeptide" id="PRO_0000453257" evidence="3">
    <location>
        <begin position="23"/>
        <end position="175"/>
    </location>
</feature>
<feature type="chain" id="PRO_0000390758" description="Inactive metallocarboxypeptidase ECM14">
    <location>
        <begin position="176"/>
        <end position="593"/>
    </location>
</feature>
<feature type="domain" description="Peptidase M14" evidence="5">
    <location>
        <begin position="211"/>
        <end position="537"/>
    </location>
</feature>
<feature type="region of interest" description="Disordered" evidence="6">
    <location>
        <begin position="75"/>
        <end position="98"/>
    </location>
</feature>
<feature type="region of interest" description="Disordered" evidence="6">
    <location>
        <begin position="172"/>
        <end position="202"/>
    </location>
</feature>
<feature type="region of interest" description="Disordered" evidence="6">
    <location>
        <begin position="548"/>
        <end position="593"/>
    </location>
</feature>
<feature type="compositionally biased region" description="Basic and acidic residues" evidence="6">
    <location>
        <begin position="78"/>
        <end position="88"/>
    </location>
</feature>
<feature type="compositionally biased region" description="Polar residues" evidence="6">
    <location>
        <begin position="188"/>
        <end position="199"/>
    </location>
</feature>
<feature type="binding site" evidence="1">
    <location>
        <begin position="276"/>
        <end position="279"/>
    </location>
    <ligand>
        <name>substrate</name>
    </ligand>
</feature>
<feature type="binding site" evidence="5">
    <location>
        <position position="276"/>
    </location>
    <ligand>
        <name>Zn(2+)</name>
        <dbReference type="ChEBI" id="CHEBI:29105"/>
        <note>catalytic</note>
    </ligand>
</feature>
<feature type="binding site" evidence="5">
    <location>
        <position position="279"/>
    </location>
    <ligand>
        <name>Zn(2+)</name>
        <dbReference type="ChEBI" id="CHEBI:29105"/>
        <note>catalytic</note>
    </ligand>
</feature>
<feature type="binding site" evidence="1">
    <location>
        <position position="334"/>
    </location>
    <ligand>
        <name>substrate</name>
    </ligand>
</feature>
<feature type="binding site" evidence="1">
    <location>
        <begin position="351"/>
        <end position="352"/>
    </location>
    <ligand>
        <name>substrate</name>
    </ligand>
</feature>
<feature type="binding site" evidence="5">
    <location>
        <position position="408"/>
    </location>
    <ligand>
        <name>Zn(2+)</name>
        <dbReference type="ChEBI" id="CHEBI:29105"/>
        <note>catalytic</note>
    </ligand>
</feature>
<feature type="binding site" evidence="1">
    <location>
        <begin position="409"/>
        <end position="410"/>
    </location>
    <ligand>
        <name>substrate</name>
    </ligand>
</feature>
<feature type="glycosylation site" description="N-linked (GlcNAc...) asparagine" evidence="4">
    <location>
        <position position="361"/>
    </location>
</feature>
<feature type="disulfide bond" evidence="2">
    <location>
        <begin position="345"/>
        <end position="368"/>
    </location>
</feature>
<protein>
    <recommendedName>
        <fullName evidence="7">Inactive metallocarboxypeptidase ECM14</fullName>
    </recommendedName>
</protein>
<gene>
    <name type="primary">ECM14</name>
    <name type="ORF">MCYG_04493</name>
</gene>